<geneLocation type="chloroplast"/>
<name>RK2_CYACA</name>
<accession>Q9TLT5</accession>
<comment type="subunit">
    <text evidence="1">Part of the 50S ribosomal subunit.</text>
</comment>
<comment type="subcellular location">
    <subcellularLocation>
        <location>Plastid</location>
        <location>Chloroplast</location>
    </subcellularLocation>
</comment>
<comment type="similarity">
    <text evidence="4">Belongs to the universal ribosomal protein uL2 family.</text>
</comment>
<keyword id="KW-0150">Chloroplast</keyword>
<keyword id="KW-0934">Plastid</keyword>
<keyword id="KW-0687">Ribonucleoprotein</keyword>
<keyword id="KW-0689">Ribosomal protein</keyword>
<reference key="1">
    <citation type="journal article" date="2000" name="J. Mol. Evol.">
        <title>The structure and gene repertoire of an ancient red algal plastid genome.</title>
        <authorList>
            <person name="Gloeckner G."/>
            <person name="Rosenthal A."/>
            <person name="Valentin K.-U."/>
        </authorList>
    </citation>
    <scope>NUCLEOTIDE SEQUENCE [LARGE SCALE GENOMIC DNA]</scope>
    <source>
        <strain>RK-1</strain>
    </source>
</reference>
<organism>
    <name type="scientific">Cyanidium caldarium</name>
    <name type="common">Red alga</name>
    <dbReference type="NCBI Taxonomy" id="2771"/>
    <lineage>
        <taxon>Eukaryota</taxon>
        <taxon>Rhodophyta</taxon>
        <taxon>Bangiophyceae</taxon>
        <taxon>Cyanidiales</taxon>
        <taxon>Cyanidiaceae</taxon>
        <taxon>Cyanidium</taxon>
    </lineage>
</organism>
<protein>
    <recommendedName>
        <fullName evidence="2">Large ribosomal subunit protein uL2c</fullName>
    </recommendedName>
    <alternativeName>
        <fullName evidence="4">50S ribosomal protein L2, chloroplastic</fullName>
    </alternativeName>
</protein>
<dbReference type="EMBL" id="AF022186">
    <property type="protein sequence ID" value="AAF12910.1"/>
    <property type="molecule type" value="Genomic_DNA"/>
</dbReference>
<dbReference type="RefSeq" id="NP_045184.1">
    <property type="nucleotide sequence ID" value="NC_001840.1"/>
</dbReference>
<dbReference type="SMR" id="Q9TLT5"/>
<dbReference type="GeneID" id="800255"/>
<dbReference type="GO" id="GO:0009507">
    <property type="term" value="C:chloroplast"/>
    <property type="evidence" value="ECO:0007669"/>
    <property type="project" value="UniProtKB-SubCell"/>
</dbReference>
<dbReference type="GO" id="GO:0015934">
    <property type="term" value="C:large ribosomal subunit"/>
    <property type="evidence" value="ECO:0007669"/>
    <property type="project" value="InterPro"/>
</dbReference>
<dbReference type="GO" id="GO:0019843">
    <property type="term" value="F:rRNA binding"/>
    <property type="evidence" value="ECO:0007669"/>
    <property type="project" value="UniProtKB-UniRule"/>
</dbReference>
<dbReference type="GO" id="GO:0003735">
    <property type="term" value="F:structural constituent of ribosome"/>
    <property type="evidence" value="ECO:0007669"/>
    <property type="project" value="InterPro"/>
</dbReference>
<dbReference type="GO" id="GO:0016740">
    <property type="term" value="F:transferase activity"/>
    <property type="evidence" value="ECO:0007669"/>
    <property type="project" value="InterPro"/>
</dbReference>
<dbReference type="GO" id="GO:0002181">
    <property type="term" value="P:cytoplasmic translation"/>
    <property type="evidence" value="ECO:0007669"/>
    <property type="project" value="TreeGrafter"/>
</dbReference>
<dbReference type="FunFam" id="2.30.30.30:FF:000001">
    <property type="entry name" value="50S ribosomal protein L2"/>
    <property type="match status" value="1"/>
</dbReference>
<dbReference type="FunFam" id="4.10.950.10:FF:000001">
    <property type="entry name" value="50S ribosomal protein L2"/>
    <property type="match status" value="1"/>
</dbReference>
<dbReference type="Gene3D" id="2.30.30.30">
    <property type="match status" value="1"/>
</dbReference>
<dbReference type="Gene3D" id="2.40.50.140">
    <property type="entry name" value="Nucleic acid-binding proteins"/>
    <property type="match status" value="1"/>
</dbReference>
<dbReference type="Gene3D" id="4.10.950.10">
    <property type="entry name" value="Ribosomal protein L2, domain 3"/>
    <property type="match status" value="1"/>
</dbReference>
<dbReference type="HAMAP" id="MF_01320_B">
    <property type="entry name" value="Ribosomal_uL2_B"/>
    <property type="match status" value="1"/>
</dbReference>
<dbReference type="InterPro" id="IPR012340">
    <property type="entry name" value="NA-bd_OB-fold"/>
</dbReference>
<dbReference type="InterPro" id="IPR014722">
    <property type="entry name" value="Rib_uL2_dom2"/>
</dbReference>
<dbReference type="InterPro" id="IPR002171">
    <property type="entry name" value="Ribosomal_uL2"/>
</dbReference>
<dbReference type="InterPro" id="IPR005880">
    <property type="entry name" value="Ribosomal_uL2_bac/org-type"/>
</dbReference>
<dbReference type="InterPro" id="IPR022669">
    <property type="entry name" value="Ribosomal_uL2_C"/>
</dbReference>
<dbReference type="InterPro" id="IPR022671">
    <property type="entry name" value="Ribosomal_uL2_CS"/>
</dbReference>
<dbReference type="InterPro" id="IPR014726">
    <property type="entry name" value="Ribosomal_uL2_dom3"/>
</dbReference>
<dbReference type="InterPro" id="IPR022666">
    <property type="entry name" value="Ribosomal_uL2_RNA-bd_dom"/>
</dbReference>
<dbReference type="InterPro" id="IPR008991">
    <property type="entry name" value="Translation_prot_SH3-like_sf"/>
</dbReference>
<dbReference type="NCBIfam" id="TIGR01171">
    <property type="entry name" value="rplB_bact"/>
    <property type="match status" value="1"/>
</dbReference>
<dbReference type="PANTHER" id="PTHR13691:SF5">
    <property type="entry name" value="LARGE RIBOSOMAL SUBUNIT PROTEIN UL2M"/>
    <property type="match status" value="1"/>
</dbReference>
<dbReference type="PANTHER" id="PTHR13691">
    <property type="entry name" value="RIBOSOMAL PROTEIN L2"/>
    <property type="match status" value="1"/>
</dbReference>
<dbReference type="Pfam" id="PF00181">
    <property type="entry name" value="Ribosomal_L2"/>
    <property type="match status" value="1"/>
</dbReference>
<dbReference type="Pfam" id="PF03947">
    <property type="entry name" value="Ribosomal_L2_C"/>
    <property type="match status" value="1"/>
</dbReference>
<dbReference type="PIRSF" id="PIRSF002158">
    <property type="entry name" value="Ribosomal_L2"/>
    <property type="match status" value="1"/>
</dbReference>
<dbReference type="SMART" id="SM01383">
    <property type="entry name" value="Ribosomal_L2"/>
    <property type="match status" value="1"/>
</dbReference>
<dbReference type="SMART" id="SM01382">
    <property type="entry name" value="Ribosomal_L2_C"/>
    <property type="match status" value="1"/>
</dbReference>
<dbReference type="SUPFAM" id="SSF50249">
    <property type="entry name" value="Nucleic acid-binding proteins"/>
    <property type="match status" value="1"/>
</dbReference>
<dbReference type="SUPFAM" id="SSF50104">
    <property type="entry name" value="Translation proteins SH3-like domain"/>
    <property type="match status" value="1"/>
</dbReference>
<dbReference type="PROSITE" id="PS00467">
    <property type="entry name" value="RIBOSOMAL_L2"/>
    <property type="match status" value="1"/>
</dbReference>
<gene>
    <name type="primary">rpl2</name>
</gene>
<proteinExistence type="inferred from homology"/>
<sequence length="275" mass="30368">MAIKKYKPYTPSMRGRVLASDFFDLSEKKAPKRLSFGIKSISGRNNQGKITCRHKGGGHKRKYRLVDFKRCKTGVLAKVSDIYYDPNRSAHIALLNYLDGEKSYIISPNLLKVGTYVVSGKEASPDIGNALPLNCVPLGFEIHNIELIHGKGGQVARAAGTSAKLIAKSQDYVTIKLPSGEIRLFRGECYATIGKVGNIDHNNEKIGKAGRNRWLGIRPTVRGSAMNAVDHPHGGGEGRSPIGRSQPSTPWGRPALGIKTRRNKFSNFYILRRRK</sequence>
<feature type="chain" id="PRO_0000129672" description="Large ribosomal subunit protein uL2c">
    <location>
        <begin position="1"/>
        <end position="275"/>
    </location>
</feature>
<feature type="region of interest" description="Disordered" evidence="3">
    <location>
        <begin position="225"/>
        <end position="256"/>
    </location>
</feature>
<evidence type="ECO:0000250" key="1"/>
<evidence type="ECO:0000255" key="2">
    <source>
        <dbReference type="HAMAP-Rule" id="MF_01320"/>
    </source>
</evidence>
<evidence type="ECO:0000256" key="3">
    <source>
        <dbReference type="SAM" id="MobiDB-lite"/>
    </source>
</evidence>
<evidence type="ECO:0000305" key="4"/>